<sequence>MRQKTLDVLEFEKIKSLVANETISDLGLEKVNQMMPATNFETVVFQMEETDEIAQIYNKHRLPSLSGLSKVSAFIHRADIGGVLNVSELNLIKRLIQVQNQFKTFYNQLVEEDEGVKYPILDDKMNQLPVLTDLFQQINETCDTYDLYDNASYELQGIRSKISSTNQRIRQNLDRIVKSQANQKKLSDAIVTVRNERNVIPVKAEYRQDFNGIVHDQSASGQTLYIEPSSVVEMNNQISRLRHDEAIEKERILTQLTGYVAADKDALLVAEQVMGQLDFLIAKARYSRSIKGTKPIFKEDRTVYLPKAYHPLLNRETVVANTIEFMEDIETVIITGPNTGGKTVTLKTLGLIIVMAQSGLLIPTLDGSQLSVFKNVYCDIGDEQSIEQSLSTFSSHMTNIVEILKHADKHSLVLFDELGAGTDPSEGAALAMSILDHVRKIGSLVMATTHYPELKAYSYNREGVMNASVEFDVDTLSPTYKLLMGVPGRSNAFDISKKLGLSLNIINKAKTMIGTDEKEINEMIESLERNYKRVETQRLELDRLVKEAEQVHDDLSKQYQQFQNYEKSLIEEAKEKANQKIKAATKEADDIIKDLRQLREQKGADVKEHELIDKKKRLDDHYEAKSIKQNVQKQKYDKIVAGDEVKVLSYGQKGEVLEIVNDEEAIVQMGIIKMKLPIEDLEKKQKEKVKPTKMVTRQNRQTIKTELDLRGYRYEDALIELDQYLDQAVLSNYEQVYIIHGKGTGALQKGVQQHLKKHKSVSDFRGGMPSEGGFGVTVATLK</sequence>
<feature type="chain" id="PRO_1000093384" description="Endonuclease MutS2">
    <location>
        <begin position="1"/>
        <end position="782"/>
    </location>
</feature>
<feature type="domain" description="Smr" evidence="1">
    <location>
        <begin position="707"/>
        <end position="782"/>
    </location>
</feature>
<feature type="binding site" evidence="1">
    <location>
        <begin position="336"/>
        <end position="343"/>
    </location>
    <ligand>
        <name>ATP</name>
        <dbReference type="ChEBI" id="CHEBI:30616"/>
    </ligand>
</feature>
<comment type="function">
    <text evidence="1">Endonuclease that is involved in the suppression of homologous recombination and thus may have a key role in the control of bacterial genetic diversity.</text>
</comment>
<comment type="function">
    <text evidence="1">Acts as a ribosome collision sensor, splitting the ribosome into its 2 subunits. Detects stalled/collided 70S ribosomes which it binds and splits by an ATP-hydrolysis driven conformational change. Acts upstream of the ribosome quality control system (RQC), a ribosome-associated complex that mediates the extraction of incompletely synthesized nascent chains from stalled ribosomes and their subsequent degradation. Probably generates substrates for RQC.</text>
</comment>
<comment type="subunit">
    <text evidence="1">Homodimer. Binds to stalled ribosomes, contacting rRNA.</text>
</comment>
<comment type="similarity">
    <text evidence="1">Belongs to the DNA mismatch repair MutS family. MutS2 subfamily.</text>
</comment>
<reference key="1">
    <citation type="journal article" date="2007" name="BMC Microbiol.">
        <title>Subtle genetic changes enhance virulence of methicillin resistant and sensitive Staphylococcus aureus.</title>
        <authorList>
            <person name="Highlander S.K."/>
            <person name="Hulten K.G."/>
            <person name="Qin X."/>
            <person name="Jiang H."/>
            <person name="Yerrapragada S."/>
            <person name="Mason E.O. Jr."/>
            <person name="Shang Y."/>
            <person name="Williams T.M."/>
            <person name="Fortunov R.M."/>
            <person name="Liu Y."/>
            <person name="Igboeli O."/>
            <person name="Petrosino J."/>
            <person name="Tirumalai M."/>
            <person name="Uzman A."/>
            <person name="Fox G.E."/>
            <person name="Cardenas A.M."/>
            <person name="Muzny D.M."/>
            <person name="Hemphill L."/>
            <person name="Ding Y."/>
            <person name="Dugan S."/>
            <person name="Blyth P.R."/>
            <person name="Buhay C.J."/>
            <person name="Dinh H.H."/>
            <person name="Hawes A.C."/>
            <person name="Holder M."/>
            <person name="Kovar C.L."/>
            <person name="Lee S.L."/>
            <person name="Liu W."/>
            <person name="Nazareth L.V."/>
            <person name="Wang Q."/>
            <person name="Zhou J."/>
            <person name="Kaplan S.L."/>
            <person name="Weinstock G.M."/>
        </authorList>
    </citation>
    <scope>NUCLEOTIDE SEQUENCE [LARGE SCALE GENOMIC DNA]</scope>
    <source>
        <strain>USA300 / TCH1516</strain>
    </source>
</reference>
<protein>
    <recommendedName>
        <fullName evidence="1">Endonuclease MutS2</fullName>
        <ecNumber evidence="1">3.1.-.-</ecNumber>
    </recommendedName>
    <alternativeName>
        <fullName evidence="1">Ribosome-associated protein quality control-upstream factor</fullName>
        <shortName evidence="1">RQC-upstream factor</shortName>
        <shortName evidence="1">RqcU</shortName>
        <ecNumber evidence="1">3.6.4.-</ecNumber>
    </alternativeName>
</protein>
<keyword id="KW-0067">ATP-binding</keyword>
<keyword id="KW-0238">DNA-binding</keyword>
<keyword id="KW-0255">Endonuclease</keyword>
<keyword id="KW-0378">Hydrolase</keyword>
<keyword id="KW-0540">Nuclease</keyword>
<keyword id="KW-0547">Nucleotide-binding</keyword>
<keyword id="KW-0694">RNA-binding</keyword>
<keyword id="KW-0699">rRNA-binding</keyword>
<evidence type="ECO:0000255" key="1">
    <source>
        <dbReference type="HAMAP-Rule" id="MF_00092"/>
    </source>
</evidence>
<organism>
    <name type="scientific">Staphylococcus aureus (strain USA300 / TCH1516)</name>
    <dbReference type="NCBI Taxonomy" id="451516"/>
    <lineage>
        <taxon>Bacteria</taxon>
        <taxon>Bacillati</taxon>
        <taxon>Bacillota</taxon>
        <taxon>Bacilli</taxon>
        <taxon>Bacillales</taxon>
        <taxon>Staphylococcaceae</taxon>
        <taxon>Staphylococcus</taxon>
    </lineage>
</organism>
<dbReference type="EC" id="3.1.-.-" evidence="1"/>
<dbReference type="EC" id="3.6.4.-" evidence="1"/>
<dbReference type="EMBL" id="CP000730">
    <property type="protein sequence ID" value="ABX29098.1"/>
    <property type="molecule type" value="Genomic_DNA"/>
</dbReference>
<dbReference type="RefSeq" id="WP_001249285.1">
    <property type="nucleotide sequence ID" value="NC_010079.1"/>
</dbReference>
<dbReference type="SMR" id="A8Z1S5"/>
<dbReference type="KEGG" id="sax:USA300HOU_1079"/>
<dbReference type="HOGENOM" id="CLU_011252_2_1_9"/>
<dbReference type="GO" id="GO:0005524">
    <property type="term" value="F:ATP binding"/>
    <property type="evidence" value="ECO:0007669"/>
    <property type="project" value="UniProtKB-UniRule"/>
</dbReference>
<dbReference type="GO" id="GO:0016887">
    <property type="term" value="F:ATP hydrolysis activity"/>
    <property type="evidence" value="ECO:0007669"/>
    <property type="project" value="InterPro"/>
</dbReference>
<dbReference type="GO" id="GO:0140664">
    <property type="term" value="F:ATP-dependent DNA damage sensor activity"/>
    <property type="evidence" value="ECO:0007669"/>
    <property type="project" value="InterPro"/>
</dbReference>
<dbReference type="GO" id="GO:0004519">
    <property type="term" value="F:endonuclease activity"/>
    <property type="evidence" value="ECO:0007669"/>
    <property type="project" value="UniProtKB-UniRule"/>
</dbReference>
<dbReference type="GO" id="GO:0030983">
    <property type="term" value="F:mismatched DNA binding"/>
    <property type="evidence" value="ECO:0007669"/>
    <property type="project" value="InterPro"/>
</dbReference>
<dbReference type="GO" id="GO:0043023">
    <property type="term" value="F:ribosomal large subunit binding"/>
    <property type="evidence" value="ECO:0007669"/>
    <property type="project" value="UniProtKB-UniRule"/>
</dbReference>
<dbReference type="GO" id="GO:0019843">
    <property type="term" value="F:rRNA binding"/>
    <property type="evidence" value="ECO:0007669"/>
    <property type="project" value="UniProtKB-UniRule"/>
</dbReference>
<dbReference type="GO" id="GO:0006298">
    <property type="term" value="P:mismatch repair"/>
    <property type="evidence" value="ECO:0007669"/>
    <property type="project" value="InterPro"/>
</dbReference>
<dbReference type="GO" id="GO:0045910">
    <property type="term" value="P:negative regulation of DNA recombination"/>
    <property type="evidence" value="ECO:0007669"/>
    <property type="project" value="InterPro"/>
</dbReference>
<dbReference type="GO" id="GO:0072344">
    <property type="term" value="P:rescue of stalled ribosome"/>
    <property type="evidence" value="ECO:0007669"/>
    <property type="project" value="UniProtKB-UniRule"/>
</dbReference>
<dbReference type="CDD" id="cd03280">
    <property type="entry name" value="ABC_MutS2"/>
    <property type="match status" value="1"/>
</dbReference>
<dbReference type="FunFam" id="3.30.1370.110:FF:000006">
    <property type="entry name" value="Endonuclease MutS2"/>
    <property type="match status" value="1"/>
</dbReference>
<dbReference type="FunFam" id="3.40.50.300:FF:000830">
    <property type="entry name" value="Endonuclease MutS2"/>
    <property type="match status" value="1"/>
</dbReference>
<dbReference type="Gene3D" id="3.30.1370.110">
    <property type="match status" value="1"/>
</dbReference>
<dbReference type="Gene3D" id="3.40.50.300">
    <property type="entry name" value="P-loop containing nucleotide triphosphate hydrolases"/>
    <property type="match status" value="1"/>
</dbReference>
<dbReference type="HAMAP" id="MF_00092">
    <property type="entry name" value="MutS2"/>
    <property type="match status" value="1"/>
</dbReference>
<dbReference type="InterPro" id="IPR000432">
    <property type="entry name" value="DNA_mismatch_repair_MutS_C"/>
</dbReference>
<dbReference type="InterPro" id="IPR007696">
    <property type="entry name" value="DNA_mismatch_repair_MutS_core"/>
</dbReference>
<dbReference type="InterPro" id="IPR036187">
    <property type="entry name" value="DNA_mismatch_repair_MutS_sf"/>
</dbReference>
<dbReference type="InterPro" id="IPR046893">
    <property type="entry name" value="MSSS"/>
</dbReference>
<dbReference type="InterPro" id="IPR045076">
    <property type="entry name" value="MutS"/>
</dbReference>
<dbReference type="InterPro" id="IPR005747">
    <property type="entry name" value="MutS2"/>
</dbReference>
<dbReference type="InterPro" id="IPR027417">
    <property type="entry name" value="P-loop_NTPase"/>
</dbReference>
<dbReference type="InterPro" id="IPR002625">
    <property type="entry name" value="Smr_dom"/>
</dbReference>
<dbReference type="InterPro" id="IPR036063">
    <property type="entry name" value="Smr_dom_sf"/>
</dbReference>
<dbReference type="NCBIfam" id="TIGR01069">
    <property type="entry name" value="mutS2"/>
    <property type="match status" value="1"/>
</dbReference>
<dbReference type="PANTHER" id="PTHR48466:SF2">
    <property type="entry name" value="OS10G0509000 PROTEIN"/>
    <property type="match status" value="1"/>
</dbReference>
<dbReference type="PANTHER" id="PTHR48466">
    <property type="entry name" value="OS10G0509000 PROTEIN-RELATED"/>
    <property type="match status" value="1"/>
</dbReference>
<dbReference type="Pfam" id="PF20297">
    <property type="entry name" value="MSSS"/>
    <property type="match status" value="1"/>
</dbReference>
<dbReference type="Pfam" id="PF00488">
    <property type="entry name" value="MutS_V"/>
    <property type="match status" value="1"/>
</dbReference>
<dbReference type="Pfam" id="PF01713">
    <property type="entry name" value="Smr"/>
    <property type="match status" value="1"/>
</dbReference>
<dbReference type="PIRSF" id="PIRSF005814">
    <property type="entry name" value="MutS_YshD"/>
    <property type="match status" value="1"/>
</dbReference>
<dbReference type="SMART" id="SM00534">
    <property type="entry name" value="MUTSac"/>
    <property type="match status" value="1"/>
</dbReference>
<dbReference type="SMART" id="SM00533">
    <property type="entry name" value="MUTSd"/>
    <property type="match status" value="1"/>
</dbReference>
<dbReference type="SMART" id="SM00463">
    <property type="entry name" value="SMR"/>
    <property type="match status" value="1"/>
</dbReference>
<dbReference type="SUPFAM" id="SSF48334">
    <property type="entry name" value="DNA repair protein MutS, domain III"/>
    <property type="match status" value="1"/>
</dbReference>
<dbReference type="SUPFAM" id="SSF52540">
    <property type="entry name" value="P-loop containing nucleoside triphosphate hydrolases"/>
    <property type="match status" value="1"/>
</dbReference>
<dbReference type="SUPFAM" id="SSF160443">
    <property type="entry name" value="SMR domain-like"/>
    <property type="match status" value="1"/>
</dbReference>
<dbReference type="PROSITE" id="PS00486">
    <property type="entry name" value="DNA_MISMATCH_REPAIR_2"/>
    <property type="match status" value="1"/>
</dbReference>
<dbReference type="PROSITE" id="PS50828">
    <property type="entry name" value="SMR"/>
    <property type="match status" value="1"/>
</dbReference>
<accession>A8Z1S5</accession>
<gene>
    <name evidence="1" type="primary">mutS2</name>
    <name evidence="1" type="synonym">rqcU</name>
    <name type="ordered locus">USA300HOU_1079</name>
</gene>
<name>MUTS2_STAAT</name>
<proteinExistence type="inferred from homology"/>